<organism>
    <name type="scientific">Dictyostelium discoideum</name>
    <name type="common">Social amoeba</name>
    <dbReference type="NCBI Taxonomy" id="44689"/>
    <lineage>
        <taxon>Eukaryota</taxon>
        <taxon>Amoebozoa</taxon>
        <taxon>Evosea</taxon>
        <taxon>Eumycetozoa</taxon>
        <taxon>Dictyostelia</taxon>
        <taxon>Dictyosteliales</taxon>
        <taxon>Dictyosteliaceae</taxon>
        <taxon>Dictyostelium</taxon>
    </lineage>
</organism>
<dbReference type="EMBL" id="U18063">
    <property type="protein sequence ID" value="AAA67888.1"/>
    <property type="molecule type" value="mRNA"/>
</dbReference>
<dbReference type="EMBL" id="U73685">
    <property type="protein sequence ID" value="AAB88389.1"/>
    <property type="molecule type" value="Genomic_DNA"/>
</dbReference>
<dbReference type="EMBL" id="AAFI02000005">
    <property type="protein sequence ID" value="EAL71965.1"/>
    <property type="molecule type" value="Genomic_DNA"/>
</dbReference>
<dbReference type="PIR" id="A55969">
    <property type="entry name" value="A55969"/>
</dbReference>
<dbReference type="RefSeq" id="XP_646453.1">
    <property type="nucleotide sequence ID" value="XM_641361.1"/>
</dbReference>
<dbReference type="PDB" id="6V88">
    <property type="method" value="NMR"/>
    <property type="chains" value="A/B=2-65, A/B=78-125"/>
</dbReference>
<dbReference type="PDBsum" id="6V88"/>
<dbReference type="PCDDB" id="P52285"/>
<dbReference type="SMR" id="P52285"/>
<dbReference type="BioGRID" id="1242416">
    <property type="interactions" value="5"/>
</dbReference>
<dbReference type="FunCoup" id="P52285">
    <property type="interactions" value="903"/>
</dbReference>
<dbReference type="IntAct" id="P52285">
    <property type="interactions" value="1"/>
</dbReference>
<dbReference type="STRING" id="44689.P52285"/>
<dbReference type="GlyConnect" id="191">
    <property type="glycosylation" value="2 O-Linked glycans (1 site)"/>
</dbReference>
<dbReference type="GlyCosmos" id="P52285">
    <property type="glycosylation" value="1 site, 3 glycans"/>
</dbReference>
<dbReference type="GlyGen" id="P52285">
    <property type="glycosylation" value="1 site, 1 O-linked glycan (1 site)"/>
</dbReference>
<dbReference type="iPTMnet" id="P52285"/>
<dbReference type="PaxDb" id="44689-DDB0191107"/>
<dbReference type="EnsemblProtists" id="EAL71965">
    <property type="protein sequence ID" value="EAL71965"/>
    <property type="gene ID" value="DDB_G0269230"/>
</dbReference>
<dbReference type="GeneID" id="8617413"/>
<dbReference type="KEGG" id="ddi:DDB_G0269230"/>
<dbReference type="dictyBase" id="DDB_G0269230">
    <property type="gene designation" value="fpaA"/>
</dbReference>
<dbReference type="VEuPathDB" id="AmoebaDB:DDB_G0269230"/>
<dbReference type="eggNOG" id="KOG1724">
    <property type="taxonomic scope" value="Eukaryota"/>
</dbReference>
<dbReference type="HOGENOM" id="CLU_059252_6_1_1"/>
<dbReference type="InParanoid" id="P52285"/>
<dbReference type="OMA" id="DKYTASM"/>
<dbReference type="PhylomeDB" id="P52285"/>
<dbReference type="Reactome" id="R-DDI-68949">
    <property type="pathway name" value="Orc1 removal from chromatin"/>
</dbReference>
<dbReference type="Reactome" id="R-DDI-69231">
    <property type="pathway name" value="Cyclin D associated events in G1"/>
</dbReference>
<dbReference type="Reactome" id="R-DDI-8854050">
    <property type="pathway name" value="FBXL7 down-regulates AURKA during mitotic entry and in early mitosis"/>
</dbReference>
<dbReference type="Reactome" id="R-DDI-8951664">
    <property type="pathway name" value="Neddylation"/>
</dbReference>
<dbReference type="Reactome" id="R-DDI-917937">
    <property type="pathway name" value="Iron uptake and transport"/>
</dbReference>
<dbReference type="Reactome" id="R-DDI-983168">
    <property type="pathway name" value="Antigen processing: Ubiquitination &amp; Proteasome degradation"/>
</dbReference>
<dbReference type="PRO" id="PR:P52285"/>
<dbReference type="Proteomes" id="UP000002195">
    <property type="component" value="Chromosome 1"/>
</dbReference>
<dbReference type="GO" id="GO:0005938">
    <property type="term" value="C:cell cortex"/>
    <property type="evidence" value="ECO:0000314"/>
    <property type="project" value="dictyBase"/>
</dbReference>
<dbReference type="GO" id="GO:0005737">
    <property type="term" value="C:cytoplasm"/>
    <property type="evidence" value="ECO:0000314"/>
    <property type="project" value="dictyBase"/>
</dbReference>
<dbReference type="GO" id="GO:0043223">
    <property type="term" value="C:cytoplasmic SCF ubiquitin ligase complex"/>
    <property type="evidence" value="ECO:0000314"/>
    <property type="project" value="dictyBase"/>
</dbReference>
<dbReference type="GO" id="GO:0005634">
    <property type="term" value="C:nucleus"/>
    <property type="evidence" value="ECO:0000314"/>
    <property type="project" value="dictyBase"/>
</dbReference>
<dbReference type="GO" id="GO:0097602">
    <property type="term" value="F:cullin family protein binding"/>
    <property type="evidence" value="ECO:0000353"/>
    <property type="project" value="dictyBase"/>
</dbReference>
<dbReference type="GO" id="GO:1990444">
    <property type="term" value="F:F-box domain binding"/>
    <property type="evidence" value="ECO:0000353"/>
    <property type="project" value="dictyBase"/>
</dbReference>
<dbReference type="GO" id="GO:0042802">
    <property type="term" value="F:identical protein binding"/>
    <property type="evidence" value="ECO:0000314"/>
    <property type="project" value="dictyBase"/>
</dbReference>
<dbReference type="GO" id="GO:0071987">
    <property type="term" value="F:WD40-repeat domain binding"/>
    <property type="evidence" value="ECO:0000353"/>
    <property type="project" value="dictyBase"/>
</dbReference>
<dbReference type="GO" id="GO:0016567">
    <property type="term" value="P:protein ubiquitination"/>
    <property type="evidence" value="ECO:0000304"/>
    <property type="project" value="dictyBase"/>
</dbReference>
<dbReference type="GO" id="GO:0031146">
    <property type="term" value="P:SCF-dependent proteasomal ubiquitin-dependent protein catabolic process"/>
    <property type="evidence" value="ECO:0000318"/>
    <property type="project" value="GO_Central"/>
</dbReference>
<dbReference type="GO" id="GO:0030587">
    <property type="term" value="P:sorocarp development"/>
    <property type="evidence" value="ECO:0000315"/>
    <property type="project" value="dictyBase"/>
</dbReference>
<dbReference type="CDD" id="cd18322">
    <property type="entry name" value="BTB_POZ_SKP1"/>
    <property type="match status" value="1"/>
</dbReference>
<dbReference type="FunFam" id="3.30.710.10:FF:000026">
    <property type="entry name" value="E3 ubiquitin ligase complex SCF subunit"/>
    <property type="match status" value="1"/>
</dbReference>
<dbReference type="Gene3D" id="3.30.710.10">
    <property type="entry name" value="Potassium Channel Kv1.1, Chain A"/>
    <property type="match status" value="1"/>
</dbReference>
<dbReference type="InterPro" id="IPR016897">
    <property type="entry name" value="SKP1"/>
</dbReference>
<dbReference type="InterPro" id="IPR001232">
    <property type="entry name" value="SKP1-like"/>
</dbReference>
<dbReference type="InterPro" id="IPR036296">
    <property type="entry name" value="SKP1-like_dim_sf"/>
</dbReference>
<dbReference type="InterPro" id="IPR011333">
    <property type="entry name" value="SKP1/BTB/POZ_sf"/>
</dbReference>
<dbReference type="InterPro" id="IPR016072">
    <property type="entry name" value="Skp1_comp_dimer"/>
</dbReference>
<dbReference type="InterPro" id="IPR016073">
    <property type="entry name" value="Skp1_comp_POZ"/>
</dbReference>
<dbReference type="PANTHER" id="PTHR11165">
    <property type="entry name" value="SKP1"/>
    <property type="match status" value="1"/>
</dbReference>
<dbReference type="Pfam" id="PF01466">
    <property type="entry name" value="Skp1"/>
    <property type="match status" value="1"/>
</dbReference>
<dbReference type="Pfam" id="PF03931">
    <property type="entry name" value="Skp1_POZ"/>
    <property type="match status" value="1"/>
</dbReference>
<dbReference type="PIRSF" id="PIRSF028729">
    <property type="entry name" value="E3_ubiquit_lig_SCF_Skp"/>
    <property type="match status" value="1"/>
</dbReference>
<dbReference type="SMART" id="SM00512">
    <property type="entry name" value="Skp1"/>
    <property type="match status" value="1"/>
</dbReference>
<dbReference type="SUPFAM" id="SSF54695">
    <property type="entry name" value="POZ domain"/>
    <property type="match status" value="1"/>
</dbReference>
<dbReference type="SUPFAM" id="SSF81382">
    <property type="entry name" value="Skp1 dimerisation domain-like"/>
    <property type="match status" value="1"/>
</dbReference>
<name>SKP1A_DICDI</name>
<evidence type="ECO:0000250" key="1"/>
<evidence type="ECO:0000269" key="2">
    <source>
    </source>
</evidence>
<evidence type="ECO:0000269" key="3">
    <source>
    </source>
</evidence>
<evidence type="ECO:0000269" key="4">
    <source>
    </source>
</evidence>
<evidence type="ECO:0000269" key="5">
    <source>
    </source>
</evidence>
<evidence type="ECO:0000269" key="6">
    <source>
    </source>
</evidence>
<evidence type="ECO:0000305" key="7"/>
<evidence type="ECO:0000305" key="8">
    <source>
    </source>
</evidence>
<evidence type="ECO:0007829" key="9">
    <source>
        <dbReference type="PDB" id="6V88"/>
    </source>
</evidence>
<proteinExistence type="evidence at protein level"/>
<accession>P52285</accession>
<accession>Q55CM8</accession>
<accession>Q94505</accession>
<sequence>MSLVKLESSDEKVFEIEKEIACMSVTIKNMIEDIGESDSPIPLPNVTSTILEKVLDYCRHHHQHPSPQGDDKKDEKRLDDIPPYDRDFCKVDQPTLFELILAANYLDIKPLLDVTCKTVANMIRGKTPEEIRKIFNIKNDFTPEEEEQIRKENEWCEDKGGN</sequence>
<gene>
    <name type="primary">fpaA</name>
    <name type="synonym">fp21A</name>
    <name type="synonym">fpa1</name>
    <name type="synonym">fpa1A</name>
    <name type="synonym">skp1A</name>
    <name type="ORF">DDB_G0269230</name>
</gene>
<protein>
    <recommendedName>
        <fullName>SCF ubiquitin ligase complex protein SKP1a</fullName>
    </recommendedName>
    <alternativeName>
        <fullName>Glycoprotein FP21 isoform A</fullName>
    </alternativeName>
    <component>
        <recommendedName>
            <fullName>SCF ubiquitin ligase complex protein SKP1a(4-162)</fullName>
        </recommendedName>
    </component>
    <component>
        <recommendedName>
            <fullName>SCF ubiquitin ligase complex protein SKP1a(6-162)</fullName>
        </recommendedName>
    </component>
</protein>
<comment type="subunit">
    <text>Multiprotein complex (SCF) with cullin and F-box-containing protein. Capable of undergoing aggregation.</text>
</comment>
<comment type="subcellular location">
    <subcellularLocation>
        <location>Cytoplasm</location>
    </subcellularLocation>
    <subcellularLocation>
        <location>Nucleus</location>
    </subcellularLocation>
</comment>
<comment type="developmental stage">
    <text evidence="2">Expressed throughout the life cycle.</text>
</comment>
<comment type="PTM">
    <text>O-linked glycan consists of linear Gal-Gal-Fuc-Gal-GlcNAc.</text>
</comment>
<comment type="PTM">
    <text>FpaA and fpaB seem to be identically glycosylated. Glycosylation is required for nuclear enrichment.</text>
</comment>
<comment type="PTM">
    <text evidence="3 6">Hydroxylated by phyA.</text>
</comment>
<comment type="mass spectrometry">
    <molecule>SCF ubiquitin ligase complex protein SKP1a</molecule>
    <text>The mass corresponds to the peptide with Ser-2 acetylated, Pro-143 hydroxylated and modified by a GlcNAc residue.</text>
</comment>
<comment type="miscellaneous">
    <text>There are two genes coding for Skp1, they only differ in a single position in the coding region.</text>
</comment>
<comment type="similarity">
    <text evidence="7">Belongs to the SKP1 family.</text>
</comment>
<feature type="initiator methionine" description="Removed" evidence="3 5">
    <location>
        <position position="1"/>
    </location>
</feature>
<feature type="chain" id="PRO_0000032614" description="SCF ubiquitin ligase complex protein SKP1a">
    <location>
        <begin position="2"/>
        <end position="162"/>
    </location>
</feature>
<feature type="chain" id="PRO_0000328244" description="SCF ubiquitin ligase complex protein SKP1a(4-162)">
    <location>
        <begin position="4"/>
        <end position="162"/>
    </location>
</feature>
<feature type="chain" id="PRO_0000328245" description="SCF ubiquitin ligase complex protein SKP1a(6-162)">
    <location>
        <begin position="6"/>
        <end position="162"/>
    </location>
</feature>
<feature type="region of interest" description="Interaction with the F-box domain of F-box proteins" evidence="1">
    <location>
        <begin position="100"/>
        <end position="162"/>
    </location>
</feature>
<feature type="modified residue" description="N-acetylserine" evidence="8">
    <location>
        <position position="2"/>
    </location>
</feature>
<feature type="modified residue" description="4-hydroxyproline" evidence="3 6">
    <location>
        <position position="143"/>
    </location>
</feature>
<feature type="glycosylation site" id="CAR_000228" description="O-linked (GlcNAc...) hydroxyproline" evidence="3 6">
    <location>
        <position position="143"/>
    </location>
</feature>
<feature type="mutagenesis site" description="Lack of glycosylation and absence of nuclear enrichment." evidence="2 4">
    <original>P</original>
    <variation>A</variation>
    <location>
        <position position="143"/>
    </location>
</feature>
<feature type="strand" evidence="9">
    <location>
        <begin position="3"/>
        <end position="7"/>
    </location>
</feature>
<feature type="strand" evidence="9">
    <location>
        <begin position="13"/>
        <end position="17"/>
    </location>
</feature>
<feature type="helix" evidence="9">
    <location>
        <begin position="18"/>
        <end position="21"/>
    </location>
</feature>
<feature type="helix" evidence="9">
    <location>
        <begin position="25"/>
        <end position="34"/>
    </location>
</feature>
<feature type="strand" evidence="9">
    <location>
        <begin position="44"/>
        <end position="46"/>
    </location>
</feature>
<feature type="helix" evidence="9">
    <location>
        <begin position="48"/>
        <end position="63"/>
    </location>
</feature>
<feature type="helix" evidence="9">
    <location>
        <begin position="83"/>
        <end position="89"/>
    </location>
</feature>
<feature type="helix" evidence="9">
    <location>
        <begin position="93"/>
        <end position="105"/>
    </location>
</feature>
<feature type="helix" evidence="9">
    <location>
        <begin position="109"/>
        <end position="124"/>
    </location>
</feature>
<reference key="1">
    <citation type="journal article" date="1995" name="J. Biol. Chem.">
        <title>Characterization of FP21, a cytosolic glycoprotein from Dictyostelium.</title>
        <authorList>
            <person name="Kozarov E."/>
            <person name="van der Wel H."/>
            <person name="Field M."/>
            <person name="Gritzali M."/>
            <person name="Brown R.D. Jr."/>
            <person name="West C.M."/>
        </authorList>
    </citation>
    <scope>NUCLEOTIDE SEQUENCE [MRNA]</scope>
    <scope>PROTEIN SEQUENCE OF 31-43</scope>
    <source>
        <strain>AX3</strain>
    </source>
</reference>
<reference key="2">
    <citation type="journal article" date="1997" name="Gene">
        <title>The cytosolic glycoprotein FP21 of Dictyostelium discoideum is encoded by two genes resulting in a polymorphism at a single amino acid position.</title>
        <authorList>
            <person name="West C.M."/>
            <person name="Kozarov E."/>
            <person name="Teng-Umnuay P."/>
        </authorList>
    </citation>
    <scope>NUCLEOTIDE SEQUENCE [GENOMIC DNA]</scope>
    <scope>PARTIAL PROTEIN SEQUENCE</scope>
    <scope>CLEAVAGE OF INITIATOR METHIONINE</scope>
    <source>
        <strain>AX3</strain>
    </source>
</reference>
<reference key="3">
    <citation type="journal article" date="2005" name="Nature">
        <title>The genome of the social amoeba Dictyostelium discoideum.</title>
        <authorList>
            <person name="Eichinger L."/>
            <person name="Pachebat J.A."/>
            <person name="Gloeckner G."/>
            <person name="Rajandream M.A."/>
            <person name="Sucgang R."/>
            <person name="Berriman M."/>
            <person name="Song J."/>
            <person name="Olsen R."/>
            <person name="Szafranski K."/>
            <person name="Xu Q."/>
            <person name="Tunggal B."/>
            <person name="Kummerfeld S."/>
            <person name="Madera M."/>
            <person name="Konfortov B.A."/>
            <person name="Rivero F."/>
            <person name="Bankier A.T."/>
            <person name="Lehmann R."/>
            <person name="Hamlin N."/>
            <person name="Davies R."/>
            <person name="Gaudet P."/>
            <person name="Fey P."/>
            <person name="Pilcher K."/>
            <person name="Chen G."/>
            <person name="Saunders D."/>
            <person name="Sodergren E.J."/>
            <person name="Davis P."/>
            <person name="Kerhornou A."/>
            <person name="Nie X."/>
            <person name="Hall N."/>
            <person name="Anjard C."/>
            <person name="Hemphill L."/>
            <person name="Bason N."/>
            <person name="Farbrother P."/>
            <person name="Desany B."/>
            <person name="Just E."/>
            <person name="Morio T."/>
            <person name="Rost R."/>
            <person name="Churcher C.M."/>
            <person name="Cooper J."/>
            <person name="Haydock S."/>
            <person name="van Driessche N."/>
            <person name="Cronin A."/>
            <person name="Goodhead I."/>
            <person name="Muzny D.M."/>
            <person name="Mourier T."/>
            <person name="Pain A."/>
            <person name="Lu M."/>
            <person name="Harper D."/>
            <person name="Lindsay R."/>
            <person name="Hauser H."/>
            <person name="James K.D."/>
            <person name="Quiles M."/>
            <person name="Madan Babu M."/>
            <person name="Saito T."/>
            <person name="Buchrieser C."/>
            <person name="Wardroper A."/>
            <person name="Felder M."/>
            <person name="Thangavelu M."/>
            <person name="Johnson D."/>
            <person name="Knights A."/>
            <person name="Loulseged H."/>
            <person name="Mungall K.L."/>
            <person name="Oliver K."/>
            <person name="Price C."/>
            <person name="Quail M.A."/>
            <person name="Urushihara H."/>
            <person name="Hernandez J."/>
            <person name="Rabbinowitsch E."/>
            <person name="Steffen D."/>
            <person name="Sanders M."/>
            <person name="Ma J."/>
            <person name="Kohara Y."/>
            <person name="Sharp S."/>
            <person name="Simmonds M.N."/>
            <person name="Spiegler S."/>
            <person name="Tivey A."/>
            <person name="Sugano S."/>
            <person name="White B."/>
            <person name="Walker D."/>
            <person name="Woodward J.R."/>
            <person name="Winckler T."/>
            <person name="Tanaka Y."/>
            <person name="Shaulsky G."/>
            <person name="Schleicher M."/>
            <person name="Weinstock G.M."/>
            <person name="Rosenthal A."/>
            <person name="Cox E.C."/>
            <person name="Chisholm R.L."/>
            <person name="Gibbs R.A."/>
            <person name="Loomis W.F."/>
            <person name="Platzer M."/>
            <person name="Kay R.R."/>
            <person name="Williams J.G."/>
            <person name="Dear P.H."/>
            <person name="Noegel A.A."/>
            <person name="Barrell B.G."/>
            <person name="Kuspa A."/>
        </authorList>
    </citation>
    <scope>NUCLEOTIDE SEQUENCE [LARGE SCALE GENOMIC DNA]</scope>
    <source>
        <strain>AX4</strain>
    </source>
</reference>
<reference key="4">
    <citation type="journal article" date="1992" name="J. Biol. Chem.">
        <title>Characterization of a cytosolic fucosylation pathway in Dictyostelium.</title>
        <authorList>
            <person name="Gonzalez-Yanes B."/>
            <person name="Cicero J.M."/>
            <person name="Brown R.D. Jr."/>
            <person name="West C.M."/>
        </authorList>
    </citation>
    <scope>PROTEIN SEQUENCE OF 4-38</scope>
</reference>
<reference key="5">
    <citation type="journal article" date="1998" name="J. Biol. Chem.">
        <title>The cytoplasmic F-box binding protein SKP1 contains a novel pentasaccharide linked to hydroxyproline in Dictyostelium.</title>
        <authorList>
            <person name="Teng-umnuay P."/>
            <person name="Morris H.R."/>
            <person name="Dell A."/>
            <person name="Panico M."/>
            <person name="Paxton T."/>
            <person name="West C.M."/>
        </authorList>
    </citation>
    <scope>HYDROXYLATION AT PRO-143</scope>
    <scope>GLYCOSYLATION AT PRO-143</scope>
    <scope>IDENTIFICATION BY MASS SPECTROMETRY</scope>
</reference>
<reference key="6">
    <citation type="journal article" date="2001" name="Glycobiology">
        <title>Analysis of Skp1 glycosylation and nuclear enrichment in Dictyostelium.</title>
        <authorList>
            <person name="Sassi S."/>
            <person name="Sweetinburgh M."/>
            <person name="Erogul J."/>
            <person name="Zhang P."/>
            <person name="Teng-Umnuay P."/>
            <person name="West C.M."/>
        </authorList>
    </citation>
    <scope>DEVELOPMENTAL STAGE</scope>
    <scope>GLYCOSYLATION</scope>
    <scope>MUTAGENESIS OF PRO-143</scope>
    <scope>IDENTIFICATION BY MASS SPECTROMETRY</scope>
</reference>
<reference key="7">
    <citation type="journal article" date="2002" name="Glycobiology">
        <title>Complex glycosylation of Skp1 in Dictyostelium: implications for the modification of other eukaryotic cytoplasmic and nuclear proteins.</title>
        <authorList>
            <person name="West C.M."/>
            <person name="van der Wel H."/>
            <person name="Gaucher E.A."/>
        </authorList>
    </citation>
    <scope>GLYCOSYLATION</scope>
</reference>
<reference key="8">
    <citation type="journal article" date="2002" name="J. Biol. Chem.">
        <title>Molecular cloning and expression of a UDP-N-acetylglucosamine (GlcNAc):hydroxyproline polypeptide GlcNAc-transferase that modifies Skp1 in the cytoplasm of Dictyostelium.</title>
        <authorList>
            <person name="van der Wel H."/>
            <person name="Morris H.R."/>
            <person name="Panico M."/>
            <person name="Paxton T."/>
            <person name="Dell A."/>
            <person name="Kaplan L."/>
            <person name="West C.M."/>
        </authorList>
    </citation>
    <scope>GLYCOSYLATION BY GNT1</scope>
</reference>
<reference key="9">
    <citation type="journal article" date="2002" name="J. Biol. Chem.">
        <title>A bifunctional diglycosyltransferase forms the Fucalpha1,2Galbeta1,3-disaccharide on Skp1 in the cytoplasm of dictyostelium.</title>
        <authorList>
            <person name="Van Der Wel H."/>
            <person name="Fisher S.Z."/>
            <person name="West C.M."/>
        </authorList>
    </citation>
    <scope>CLEAVAGE OF INITIATOR METHIONINE</scope>
    <scope>ACETYLATION AT SER-2</scope>
    <scope>HYDROXYLATION AT PRO-143</scope>
    <scope>GLYCOSYLATION AT PRO-143</scope>
    <scope>MASS SPECTROMETRY</scope>
</reference>
<reference key="10">
    <citation type="journal article" date="2004" name="J. Biol. Chem.">
        <title>Specificity of a soluble UDP-galactose:fucoside alpha1,3-galactosyltransferase that modifies the cytoplasmic glycoprotein Skp1 in Dictyostelium.</title>
        <authorList>
            <person name="Ketcham C."/>
            <person name="Wang F."/>
            <person name="Fisher S.Z."/>
            <person name="Ercan A."/>
            <person name="van der Wel H."/>
            <person name="Locke R.D."/>
            <person name="Sirajud-Doulah K."/>
            <person name="Matta K.L."/>
            <person name="West C.M."/>
        </authorList>
    </citation>
    <scope>GLYCOSYLATION BY AGTA</scope>
</reference>
<reference key="11">
    <citation type="journal article" date="2005" name="J. Biol. Chem.">
        <title>The Skp1 prolyl hydroxylase from Dictyostelium is related to the hypoxia-inducible factor-alpha class of animal prolyl 4-hydroxylases.</title>
        <authorList>
            <person name="van der Wel H."/>
            <person name="Ercan A."/>
            <person name="West C.M."/>
        </authorList>
    </citation>
    <scope>MUTAGENESIS OF PRO-143</scope>
</reference>
<reference key="12">
    <citation type="journal article" date="2006" name="J. Proteome Res.">
        <title>Identification of novel centrosomal proteins in Dictyostelium discoideum by comparative proteomic approaches.</title>
        <authorList>
            <person name="Reinders Y."/>
            <person name="Schulz I."/>
            <person name="Graef R."/>
            <person name="Sickmann A."/>
        </authorList>
    </citation>
    <scope>IDENTIFICATION BY MASS SPECTROMETRY [LARGE SCALE ANALYSIS]</scope>
</reference>
<keyword id="KW-0002">3D-structure</keyword>
<keyword id="KW-0007">Acetylation</keyword>
<keyword id="KW-0963">Cytoplasm</keyword>
<keyword id="KW-0903">Direct protein sequencing</keyword>
<keyword id="KW-0325">Glycoprotein</keyword>
<keyword id="KW-0379">Hydroxylation</keyword>
<keyword id="KW-0539">Nucleus</keyword>
<keyword id="KW-1185">Reference proteome</keyword>
<keyword id="KW-0833">Ubl conjugation pathway</keyword>